<accession>Q5PDC7</accession>
<evidence type="ECO:0000255" key="1">
    <source>
        <dbReference type="HAMAP-Rule" id="MF_00046"/>
    </source>
</evidence>
<name>MURC_SALPA</name>
<proteinExistence type="inferred from homology"/>
<reference key="1">
    <citation type="journal article" date="2004" name="Nat. Genet.">
        <title>Comparison of genome degradation in Paratyphi A and Typhi, human-restricted serovars of Salmonella enterica that cause typhoid.</title>
        <authorList>
            <person name="McClelland M."/>
            <person name="Sanderson K.E."/>
            <person name="Clifton S.W."/>
            <person name="Latreille P."/>
            <person name="Porwollik S."/>
            <person name="Sabo A."/>
            <person name="Meyer R."/>
            <person name="Bieri T."/>
            <person name="Ozersky P."/>
            <person name="McLellan M."/>
            <person name="Harkins C.R."/>
            <person name="Wang C."/>
            <person name="Nguyen C."/>
            <person name="Berghoff A."/>
            <person name="Elliott G."/>
            <person name="Kohlberg S."/>
            <person name="Strong C."/>
            <person name="Du F."/>
            <person name="Carter J."/>
            <person name="Kremizki C."/>
            <person name="Layman D."/>
            <person name="Leonard S."/>
            <person name="Sun H."/>
            <person name="Fulton L."/>
            <person name="Nash W."/>
            <person name="Miner T."/>
            <person name="Minx P."/>
            <person name="Delehaunty K."/>
            <person name="Fronick C."/>
            <person name="Magrini V."/>
            <person name="Nhan M."/>
            <person name="Warren W."/>
            <person name="Florea L."/>
            <person name="Spieth J."/>
            <person name="Wilson R.K."/>
        </authorList>
    </citation>
    <scope>NUCLEOTIDE SEQUENCE [LARGE SCALE GENOMIC DNA]</scope>
    <source>
        <strain>ATCC 9150 / SARB42</strain>
    </source>
</reference>
<comment type="function">
    <text evidence="1">Cell wall formation.</text>
</comment>
<comment type="catalytic activity">
    <reaction evidence="1">
        <text>UDP-N-acetyl-alpha-D-muramate + L-alanine + ATP = UDP-N-acetyl-alpha-D-muramoyl-L-alanine + ADP + phosphate + H(+)</text>
        <dbReference type="Rhea" id="RHEA:23372"/>
        <dbReference type="ChEBI" id="CHEBI:15378"/>
        <dbReference type="ChEBI" id="CHEBI:30616"/>
        <dbReference type="ChEBI" id="CHEBI:43474"/>
        <dbReference type="ChEBI" id="CHEBI:57972"/>
        <dbReference type="ChEBI" id="CHEBI:70757"/>
        <dbReference type="ChEBI" id="CHEBI:83898"/>
        <dbReference type="ChEBI" id="CHEBI:456216"/>
        <dbReference type="EC" id="6.3.2.8"/>
    </reaction>
</comment>
<comment type="pathway">
    <text evidence="1">Cell wall biogenesis; peptidoglycan biosynthesis.</text>
</comment>
<comment type="subcellular location">
    <subcellularLocation>
        <location evidence="1">Cytoplasm</location>
    </subcellularLocation>
</comment>
<comment type="similarity">
    <text evidence="1">Belongs to the MurCDEF family.</text>
</comment>
<organism>
    <name type="scientific">Salmonella paratyphi A (strain ATCC 9150 / SARB42)</name>
    <dbReference type="NCBI Taxonomy" id="295319"/>
    <lineage>
        <taxon>Bacteria</taxon>
        <taxon>Pseudomonadati</taxon>
        <taxon>Pseudomonadota</taxon>
        <taxon>Gammaproteobacteria</taxon>
        <taxon>Enterobacterales</taxon>
        <taxon>Enterobacteriaceae</taxon>
        <taxon>Salmonella</taxon>
    </lineage>
</organism>
<gene>
    <name evidence="1" type="primary">murC</name>
    <name type="ordered locus">SPA0131</name>
</gene>
<keyword id="KW-0067">ATP-binding</keyword>
<keyword id="KW-0131">Cell cycle</keyword>
<keyword id="KW-0132">Cell division</keyword>
<keyword id="KW-0133">Cell shape</keyword>
<keyword id="KW-0961">Cell wall biogenesis/degradation</keyword>
<keyword id="KW-0963">Cytoplasm</keyword>
<keyword id="KW-0436">Ligase</keyword>
<keyword id="KW-0547">Nucleotide-binding</keyword>
<keyword id="KW-0573">Peptidoglycan synthesis</keyword>
<feature type="chain" id="PRO_0000182146" description="UDP-N-acetylmuramate--L-alanine ligase">
    <location>
        <begin position="1"/>
        <end position="491"/>
    </location>
</feature>
<feature type="binding site" evidence="1">
    <location>
        <begin position="126"/>
        <end position="132"/>
    </location>
    <ligand>
        <name>ATP</name>
        <dbReference type="ChEBI" id="CHEBI:30616"/>
    </ligand>
</feature>
<protein>
    <recommendedName>
        <fullName evidence="1">UDP-N-acetylmuramate--L-alanine ligase</fullName>
        <ecNumber evidence="1">6.3.2.8</ecNumber>
    </recommendedName>
    <alternativeName>
        <fullName evidence="1">UDP-N-acetylmuramoyl-L-alanine synthetase</fullName>
    </alternativeName>
</protein>
<dbReference type="EC" id="6.3.2.8" evidence="1"/>
<dbReference type="EMBL" id="CP000026">
    <property type="protein sequence ID" value="AAV76164.1"/>
    <property type="molecule type" value="Genomic_DNA"/>
</dbReference>
<dbReference type="RefSeq" id="WP_001096078.1">
    <property type="nucleotide sequence ID" value="NC_006511.1"/>
</dbReference>
<dbReference type="SMR" id="Q5PDC7"/>
<dbReference type="KEGG" id="spt:SPA0131"/>
<dbReference type="HOGENOM" id="CLU_028104_2_2_6"/>
<dbReference type="UniPathway" id="UPA00219"/>
<dbReference type="Proteomes" id="UP000008185">
    <property type="component" value="Chromosome"/>
</dbReference>
<dbReference type="GO" id="GO:0005737">
    <property type="term" value="C:cytoplasm"/>
    <property type="evidence" value="ECO:0007669"/>
    <property type="project" value="UniProtKB-SubCell"/>
</dbReference>
<dbReference type="GO" id="GO:0005524">
    <property type="term" value="F:ATP binding"/>
    <property type="evidence" value="ECO:0007669"/>
    <property type="project" value="UniProtKB-UniRule"/>
</dbReference>
<dbReference type="GO" id="GO:0008763">
    <property type="term" value="F:UDP-N-acetylmuramate-L-alanine ligase activity"/>
    <property type="evidence" value="ECO:0007669"/>
    <property type="project" value="UniProtKB-UniRule"/>
</dbReference>
<dbReference type="GO" id="GO:0051301">
    <property type="term" value="P:cell division"/>
    <property type="evidence" value="ECO:0007669"/>
    <property type="project" value="UniProtKB-KW"/>
</dbReference>
<dbReference type="GO" id="GO:0071555">
    <property type="term" value="P:cell wall organization"/>
    <property type="evidence" value="ECO:0007669"/>
    <property type="project" value="UniProtKB-KW"/>
</dbReference>
<dbReference type="GO" id="GO:0009252">
    <property type="term" value="P:peptidoglycan biosynthetic process"/>
    <property type="evidence" value="ECO:0007669"/>
    <property type="project" value="UniProtKB-UniRule"/>
</dbReference>
<dbReference type="GO" id="GO:0008360">
    <property type="term" value="P:regulation of cell shape"/>
    <property type="evidence" value="ECO:0007669"/>
    <property type="project" value="UniProtKB-KW"/>
</dbReference>
<dbReference type="FunFam" id="3.40.1190.10:FF:000001">
    <property type="entry name" value="UDP-N-acetylmuramate--L-alanine ligase"/>
    <property type="match status" value="1"/>
</dbReference>
<dbReference type="FunFam" id="3.40.50.720:FF:000046">
    <property type="entry name" value="UDP-N-acetylmuramate--L-alanine ligase"/>
    <property type="match status" value="1"/>
</dbReference>
<dbReference type="FunFam" id="3.90.190.20:FF:000001">
    <property type="entry name" value="UDP-N-acetylmuramate--L-alanine ligase"/>
    <property type="match status" value="1"/>
</dbReference>
<dbReference type="Gene3D" id="3.90.190.20">
    <property type="entry name" value="Mur ligase, C-terminal domain"/>
    <property type="match status" value="1"/>
</dbReference>
<dbReference type="Gene3D" id="3.40.1190.10">
    <property type="entry name" value="Mur-like, catalytic domain"/>
    <property type="match status" value="1"/>
</dbReference>
<dbReference type="Gene3D" id="3.40.50.720">
    <property type="entry name" value="NAD(P)-binding Rossmann-like Domain"/>
    <property type="match status" value="1"/>
</dbReference>
<dbReference type="HAMAP" id="MF_00046">
    <property type="entry name" value="MurC"/>
    <property type="match status" value="1"/>
</dbReference>
<dbReference type="InterPro" id="IPR036565">
    <property type="entry name" value="Mur-like_cat_sf"/>
</dbReference>
<dbReference type="InterPro" id="IPR004101">
    <property type="entry name" value="Mur_ligase_C"/>
</dbReference>
<dbReference type="InterPro" id="IPR036615">
    <property type="entry name" value="Mur_ligase_C_dom_sf"/>
</dbReference>
<dbReference type="InterPro" id="IPR013221">
    <property type="entry name" value="Mur_ligase_cen"/>
</dbReference>
<dbReference type="InterPro" id="IPR000713">
    <property type="entry name" value="Mur_ligase_N"/>
</dbReference>
<dbReference type="InterPro" id="IPR050061">
    <property type="entry name" value="MurCDEF_pg_biosynth"/>
</dbReference>
<dbReference type="InterPro" id="IPR005758">
    <property type="entry name" value="UDP-N-AcMur_Ala_ligase_MurC"/>
</dbReference>
<dbReference type="NCBIfam" id="TIGR01082">
    <property type="entry name" value="murC"/>
    <property type="match status" value="1"/>
</dbReference>
<dbReference type="PANTHER" id="PTHR43445:SF3">
    <property type="entry name" value="UDP-N-ACETYLMURAMATE--L-ALANINE LIGASE"/>
    <property type="match status" value="1"/>
</dbReference>
<dbReference type="PANTHER" id="PTHR43445">
    <property type="entry name" value="UDP-N-ACETYLMURAMATE--L-ALANINE LIGASE-RELATED"/>
    <property type="match status" value="1"/>
</dbReference>
<dbReference type="Pfam" id="PF01225">
    <property type="entry name" value="Mur_ligase"/>
    <property type="match status" value="1"/>
</dbReference>
<dbReference type="Pfam" id="PF02875">
    <property type="entry name" value="Mur_ligase_C"/>
    <property type="match status" value="1"/>
</dbReference>
<dbReference type="Pfam" id="PF08245">
    <property type="entry name" value="Mur_ligase_M"/>
    <property type="match status" value="1"/>
</dbReference>
<dbReference type="SUPFAM" id="SSF51984">
    <property type="entry name" value="MurCD N-terminal domain"/>
    <property type="match status" value="1"/>
</dbReference>
<dbReference type="SUPFAM" id="SSF53623">
    <property type="entry name" value="MurD-like peptide ligases, catalytic domain"/>
    <property type="match status" value="1"/>
</dbReference>
<dbReference type="SUPFAM" id="SSF53244">
    <property type="entry name" value="MurD-like peptide ligases, peptide-binding domain"/>
    <property type="match status" value="1"/>
</dbReference>
<sequence length="491" mass="53498">MNTQQLAKLRSIVPEMRRVRHIHFVGIGGAGMGGIAEVLANEGYQISGSDLAPNPVTQQLTSLGATIFFNHRPENVRDASVVVVSSAISSDNPEIVAAHEARIPVIRRAEMLAELMRFRHGIAIAGTHGKTTTTAMVSSIYAEAGLDPTFVNGGLVKAAGVHARLGHSRYLIAEADESDASFLHLQPMVAIVTNIEADHMDTYHGDFENLKQTFINFLHNLPFYGRAVMCVDDPVIRELLPRVGRQTTTYGFSEDADVRVEDYQQIGPQGHFTLLRQGMPDLHVTLNAPGRHNALNAAAAVAVATEEGIDDDAILRALESFQGTGRRFDFLGEFPLEPVNGKAGTAMLVDDYGHHPTEVDATIKAARAGWPDKNLVMLFQPHRYTRTRDLYDDFANVLTQVDALLMLDVYPAGEAPIPGADSRSLCRTIRNRGKIDPILVSDPAQVATMLAPVLTGNDLILVQGAGNVGKIARYLSEIKLKPQIQEEEQHG</sequence>